<sequence>MINSLLTRVFGSRNERQLRQLNRLVTQINALEPTIEKLSDAELQAKTPEFKQRLAAGESLDKILPEAFAVCREASRRVLGMRHYDVQLIGGMVLHLGKIAEMRTGEGKTLVATLPVYLNALQGEGVHVVTVNDYLARRDAAQMGKLYNWLGLSVGVVYPGMPHSDKREAYGADITYGTNNEFGFDYLRDNMALSRADRYQRNLHYAIVDEVDSILIDEARTPLIISGPADESPELYIRVNRIVPQLTRQESEEGEGDFWIDEKGKQVHLSEAGMGHAEELLLQAGILENAEDGLYAAQNLSVVHHLNAALRAHAIYQRDVDYIVRDGEVVIVDEFTGRTLSGRRWSDGLHQAVEAKEGVPVQRENQTLASITFQNLFRMYKKLSGMTGTADTEAYEFQSIYGLEVVVIPTNRPTVRKDHPDQVFLNRKGKFNAVLADIEDCAKRGQPVLVGTTSIETSEMLSEHLRKAGVKHEVLNAKQHEREATIVANAGQPGAVTIATNMAGRGTDIVLGGSLESEYHALGEDASEDARFKIKTEWQRRHDAVKAAGGLHIIGTERHESRRIDNQLRGRAGRQGDPGSSRFYLSLEDNLMRIFASDWVQKAMRMMGMKEDDVIEDRLVSRQIEKAQRKVEAHNFDIRKNLLDFDDVNNDQRKVIYAQRDELLDAESVKDNVDGIRGDVIYDLVARFVPPNSVDEQWDLKGLEATLESELGMTLSLTDMVRAQEEIDAEQIAAKVQTAVDAHFAEKEAAIGADTMRALEKHVMLTVLDQGWKEHLAKMDYLRQGIYLRGYAQKQPKQEYKKEAFELFSEMLENVKREVINLLARVRIRSEEEVAELEEQERLQAQARLMASQFQHQDVGGYGAEEEVEQMQGGNAPVPVSQVTRDEPKVGRNDPCPCGSGKKYKHCHGQLS</sequence>
<protein>
    <recommendedName>
        <fullName evidence="1">Protein translocase subunit SecA</fullName>
        <ecNumber evidence="1">7.4.2.8</ecNumber>
    </recommendedName>
</protein>
<reference key="1">
    <citation type="journal article" date="2005" name="J. Bacteriol.">
        <title>Insights into genome plasticity and pathogenicity of the plant pathogenic Bacterium Xanthomonas campestris pv. vesicatoria revealed by the complete genome sequence.</title>
        <authorList>
            <person name="Thieme F."/>
            <person name="Koebnik R."/>
            <person name="Bekel T."/>
            <person name="Berger C."/>
            <person name="Boch J."/>
            <person name="Buettner D."/>
            <person name="Caldana C."/>
            <person name="Gaigalat L."/>
            <person name="Goesmann A."/>
            <person name="Kay S."/>
            <person name="Kirchner O."/>
            <person name="Lanz C."/>
            <person name="Linke B."/>
            <person name="McHardy A.C."/>
            <person name="Meyer F."/>
            <person name="Mittenhuber G."/>
            <person name="Nies D.H."/>
            <person name="Niesbach-Kloesgen U."/>
            <person name="Patschkowski T."/>
            <person name="Rueckert C."/>
            <person name="Rupp O."/>
            <person name="Schneiker S."/>
            <person name="Schuster S.C."/>
            <person name="Vorhoelter F.J."/>
            <person name="Weber E."/>
            <person name="Puehler A."/>
            <person name="Bonas U."/>
            <person name="Bartels D."/>
            <person name="Kaiser O."/>
        </authorList>
    </citation>
    <scope>NUCLEOTIDE SEQUENCE [LARGE SCALE GENOMIC DNA]</scope>
    <source>
        <strain>85-10</strain>
    </source>
</reference>
<accession>Q3BXE3</accession>
<comment type="function">
    <text evidence="1">Part of the Sec protein translocase complex. Interacts with the SecYEG preprotein conducting channel. Has a central role in coupling the hydrolysis of ATP to the transfer of proteins into and across the cell membrane, serving both as a receptor for the preprotein-SecB complex and as an ATP-driven molecular motor driving the stepwise translocation of polypeptide chains across the membrane.</text>
</comment>
<comment type="catalytic activity">
    <reaction evidence="1">
        <text>ATP + H2O + cellular proteinSide 1 = ADP + phosphate + cellular proteinSide 2.</text>
        <dbReference type="EC" id="7.4.2.8"/>
    </reaction>
</comment>
<comment type="cofactor">
    <cofactor evidence="1">
        <name>Zn(2+)</name>
        <dbReference type="ChEBI" id="CHEBI:29105"/>
    </cofactor>
    <text evidence="1">May bind 1 zinc ion per subunit.</text>
</comment>
<comment type="subunit">
    <text evidence="1">Monomer and homodimer. Part of the essential Sec protein translocation apparatus which comprises SecA, SecYEG and auxiliary proteins SecDF-YajC and YidC.</text>
</comment>
<comment type="subcellular location">
    <subcellularLocation>
        <location evidence="1">Cell inner membrane</location>
        <topology evidence="1">Peripheral membrane protein</topology>
        <orientation evidence="1">Cytoplasmic side</orientation>
    </subcellularLocation>
    <subcellularLocation>
        <location evidence="1">Cytoplasm</location>
    </subcellularLocation>
    <text evidence="1">Distribution is 50-50.</text>
</comment>
<comment type="similarity">
    <text evidence="1">Belongs to the SecA family.</text>
</comment>
<comment type="sequence caution" evidence="3">
    <conflict type="erroneous initiation">
        <sequence resource="EMBL-CDS" id="CAJ22470"/>
    </conflict>
    <text>Extended N-terminus.</text>
</comment>
<gene>
    <name evidence="1" type="primary">secA</name>
    <name type="ordered locus">XCV0839</name>
</gene>
<proteinExistence type="inferred from homology"/>
<feature type="chain" id="PRO_0000321045" description="Protein translocase subunit SecA">
    <location>
        <begin position="1"/>
        <end position="912"/>
    </location>
</feature>
<feature type="region of interest" description="Disordered" evidence="2">
    <location>
        <begin position="864"/>
        <end position="912"/>
    </location>
</feature>
<feature type="compositionally biased region" description="Basic residues" evidence="2">
    <location>
        <begin position="902"/>
        <end position="912"/>
    </location>
</feature>
<feature type="binding site" evidence="1">
    <location>
        <position position="87"/>
    </location>
    <ligand>
        <name>ATP</name>
        <dbReference type="ChEBI" id="CHEBI:30616"/>
    </ligand>
</feature>
<feature type="binding site" evidence="1">
    <location>
        <begin position="105"/>
        <end position="109"/>
    </location>
    <ligand>
        <name>ATP</name>
        <dbReference type="ChEBI" id="CHEBI:30616"/>
    </ligand>
</feature>
<feature type="binding site" evidence="1">
    <location>
        <position position="508"/>
    </location>
    <ligand>
        <name>ATP</name>
        <dbReference type="ChEBI" id="CHEBI:30616"/>
    </ligand>
</feature>
<feature type="binding site" evidence="1">
    <location>
        <position position="896"/>
    </location>
    <ligand>
        <name>Zn(2+)</name>
        <dbReference type="ChEBI" id="CHEBI:29105"/>
    </ligand>
</feature>
<feature type="binding site" evidence="1">
    <location>
        <position position="898"/>
    </location>
    <ligand>
        <name>Zn(2+)</name>
        <dbReference type="ChEBI" id="CHEBI:29105"/>
    </ligand>
</feature>
<feature type="binding site" evidence="1">
    <location>
        <position position="907"/>
    </location>
    <ligand>
        <name>Zn(2+)</name>
        <dbReference type="ChEBI" id="CHEBI:29105"/>
    </ligand>
</feature>
<feature type="binding site" evidence="1">
    <location>
        <position position="908"/>
    </location>
    <ligand>
        <name>Zn(2+)</name>
        <dbReference type="ChEBI" id="CHEBI:29105"/>
    </ligand>
</feature>
<keyword id="KW-0067">ATP-binding</keyword>
<keyword id="KW-0997">Cell inner membrane</keyword>
<keyword id="KW-1003">Cell membrane</keyword>
<keyword id="KW-0963">Cytoplasm</keyword>
<keyword id="KW-0472">Membrane</keyword>
<keyword id="KW-0479">Metal-binding</keyword>
<keyword id="KW-0547">Nucleotide-binding</keyword>
<keyword id="KW-0653">Protein transport</keyword>
<keyword id="KW-1278">Translocase</keyword>
<keyword id="KW-0811">Translocation</keyword>
<keyword id="KW-0813">Transport</keyword>
<keyword id="KW-0862">Zinc</keyword>
<evidence type="ECO:0000255" key="1">
    <source>
        <dbReference type="HAMAP-Rule" id="MF_01382"/>
    </source>
</evidence>
<evidence type="ECO:0000256" key="2">
    <source>
        <dbReference type="SAM" id="MobiDB-lite"/>
    </source>
</evidence>
<evidence type="ECO:0000305" key="3"/>
<organism>
    <name type="scientific">Xanthomonas euvesicatoria pv. vesicatoria (strain 85-10)</name>
    <name type="common">Xanthomonas campestris pv. vesicatoria</name>
    <dbReference type="NCBI Taxonomy" id="316273"/>
    <lineage>
        <taxon>Bacteria</taxon>
        <taxon>Pseudomonadati</taxon>
        <taxon>Pseudomonadota</taxon>
        <taxon>Gammaproteobacteria</taxon>
        <taxon>Lysobacterales</taxon>
        <taxon>Lysobacteraceae</taxon>
        <taxon>Xanthomonas</taxon>
    </lineage>
</organism>
<name>SECA_XANE5</name>
<dbReference type="EC" id="7.4.2.8" evidence="1"/>
<dbReference type="EMBL" id="AM039952">
    <property type="protein sequence ID" value="CAJ22470.1"/>
    <property type="status" value="ALT_INIT"/>
    <property type="molecule type" value="Genomic_DNA"/>
</dbReference>
<dbReference type="RefSeq" id="WP_011346428.1">
    <property type="nucleotide sequence ID" value="NZ_CP017190.1"/>
</dbReference>
<dbReference type="SMR" id="Q3BXE3"/>
<dbReference type="STRING" id="456327.BJD11_18600"/>
<dbReference type="GeneID" id="63990081"/>
<dbReference type="KEGG" id="xcv:XCV0839"/>
<dbReference type="eggNOG" id="COG0653">
    <property type="taxonomic scope" value="Bacteria"/>
</dbReference>
<dbReference type="HOGENOM" id="CLU_005314_3_0_6"/>
<dbReference type="Proteomes" id="UP000007069">
    <property type="component" value="Chromosome"/>
</dbReference>
<dbReference type="GO" id="GO:0031522">
    <property type="term" value="C:cell envelope Sec protein transport complex"/>
    <property type="evidence" value="ECO:0007669"/>
    <property type="project" value="TreeGrafter"/>
</dbReference>
<dbReference type="GO" id="GO:0005829">
    <property type="term" value="C:cytosol"/>
    <property type="evidence" value="ECO:0007669"/>
    <property type="project" value="TreeGrafter"/>
</dbReference>
<dbReference type="GO" id="GO:0005886">
    <property type="term" value="C:plasma membrane"/>
    <property type="evidence" value="ECO:0007669"/>
    <property type="project" value="UniProtKB-SubCell"/>
</dbReference>
<dbReference type="GO" id="GO:0005524">
    <property type="term" value="F:ATP binding"/>
    <property type="evidence" value="ECO:0007669"/>
    <property type="project" value="UniProtKB-UniRule"/>
</dbReference>
<dbReference type="GO" id="GO:0046872">
    <property type="term" value="F:metal ion binding"/>
    <property type="evidence" value="ECO:0007669"/>
    <property type="project" value="UniProtKB-KW"/>
</dbReference>
<dbReference type="GO" id="GO:0008564">
    <property type="term" value="F:protein-exporting ATPase activity"/>
    <property type="evidence" value="ECO:0007669"/>
    <property type="project" value="UniProtKB-EC"/>
</dbReference>
<dbReference type="GO" id="GO:0065002">
    <property type="term" value="P:intracellular protein transmembrane transport"/>
    <property type="evidence" value="ECO:0007669"/>
    <property type="project" value="UniProtKB-UniRule"/>
</dbReference>
<dbReference type="GO" id="GO:0017038">
    <property type="term" value="P:protein import"/>
    <property type="evidence" value="ECO:0007669"/>
    <property type="project" value="InterPro"/>
</dbReference>
<dbReference type="GO" id="GO:0006605">
    <property type="term" value="P:protein targeting"/>
    <property type="evidence" value="ECO:0007669"/>
    <property type="project" value="UniProtKB-UniRule"/>
</dbReference>
<dbReference type="GO" id="GO:0043952">
    <property type="term" value="P:protein transport by the Sec complex"/>
    <property type="evidence" value="ECO:0007669"/>
    <property type="project" value="TreeGrafter"/>
</dbReference>
<dbReference type="CDD" id="cd17928">
    <property type="entry name" value="DEXDc_SecA"/>
    <property type="match status" value="1"/>
</dbReference>
<dbReference type="CDD" id="cd18803">
    <property type="entry name" value="SF2_C_secA"/>
    <property type="match status" value="1"/>
</dbReference>
<dbReference type="FunFam" id="3.40.50.300:FF:000081">
    <property type="entry name" value="Preprotein translocase subunit SecA"/>
    <property type="match status" value="1"/>
</dbReference>
<dbReference type="FunFam" id="3.40.50.300:FF:000113">
    <property type="entry name" value="Preprotein translocase subunit SecA"/>
    <property type="match status" value="1"/>
</dbReference>
<dbReference type="FunFam" id="3.90.1440.10:FF:000001">
    <property type="entry name" value="Preprotein translocase subunit SecA"/>
    <property type="match status" value="1"/>
</dbReference>
<dbReference type="FunFam" id="1.10.3060.10:FF:000003">
    <property type="entry name" value="Protein translocase subunit SecA"/>
    <property type="match status" value="1"/>
</dbReference>
<dbReference type="Gene3D" id="1.10.3060.10">
    <property type="entry name" value="Helical scaffold and wing domains of SecA"/>
    <property type="match status" value="1"/>
</dbReference>
<dbReference type="Gene3D" id="3.40.50.300">
    <property type="entry name" value="P-loop containing nucleotide triphosphate hydrolases"/>
    <property type="match status" value="2"/>
</dbReference>
<dbReference type="Gene3D" id="3.90.1440.10">
    <property type="entry name" value="SecA, preprotein cross-linking domain"/>
    <property type="match status" value="1"/>
</dbReference>
<dbReference type="HAMAP" id="MF_01382">
    <property type="entry name" value="SecA"/>
    <property type="match status" value="1"/>
</dbReference>
<dbReference type="InterPro" id="IPR014001">
    <property type="entry name" value="Helicase_ATP-bd"/>
</dbReference>
<dbReference type="InterPro" id="IPR001650">
    <property type="entry name" value="Helicase_C-like"/>
</dbReference>
<dbReference type="InterPro" id="IPR027417">
    <property type="entry name" value="P-loop_NTPase"/>
</dbReference>
<dbReference type="InterPro" id="IPR004027">
    <property type="entry name" value="SEC_C_motif"/>
</dbReference>
<dbReference type="InterPro" id="IPR000185">
    <property type="entry name" value="SecA"/>
</dbReference>
<dbReference type="InterPro" id="IPR020937">
    <property type="entry name" value="SecA_CS"/>
</dbReference>
<dbReference type="InterPro" id="IPR011115">
    <property type="entry name" value="SecA_DEAD"/>
</dbReference>
<dbReference type="InterPro" id="IPR014018">
    <property type="entry name" value="SecA_motor_DEAD"/>
</dbReference>
<dbReference type="InterPro" id="IPR011130">
    <property type="entry name" value="SecA_preprotein_X-link_dom"/>
</dbReference>
<dbReference type="InterPro" id="IPR044722">
    <property type="entry name" value="SecA_SF2_C"/>
</dbReference>
<dbReference type="InterPro" id="IPR011116">
    <property type="entry name" value="SecA_Wing/Scaffold"/>
</dbReference>
<dbReference type="InterPro" id="IPR036266">
    <property type="entry name" value="SecA_Wing/Scaffold_sf"/>
</dbReference>
<dbReference type="InterPro" id="IPR036670">
    <property type="entry name" value="SecA_X-link_sf"/>
</dbReference>
<dbReference type="NCBIfam" id="NF009538">
    <property type="entry name" value="PRK12904.1"/>
    <property type="match status" value="1"/>
</dbReference>
<dbReference type="NCBIfam" id="TIGR00963">
    <property type="entry name" value="secA"/>
    <property type="match status" value="1"/>
</dbReference>
<dbReference type="PANTHER" id="PTHR30612:SF0">
    <property type="entry name" value="CHLOROPLAST PROTEIN-TRANSPORTING ATPASE"/>
    <property type="match status" value="1"/>
</dbReference>
<dbReference type="PANTHER" id="PTHR30612">
    <property type="entry name" value="SECA INNER MEMBRANE COMPONENT OF SEC PROTEIN SECRETION SYSTEM"/>
    <property type="match status" value="1"/>
</dbReference>
<dbReference type="Pfam" id="PF21090">
    <property type="entry name" value="P-loop_SecA"/>
    <property type="match status" value="1"/>
</dbReference>
<dbReference type="Pfam" id="PF02810">
    <property type="entry name" value="SEC-C"/>
    <property type="match status" value="1"/>
</dbReference>
<dbReference type="Pfam" id="PF07517">
    <property type="entry name" value="SecA_DEAD"/>
    <property type="match status" value="1"/>
</dbReference>
<dbReference type="Pfam" id="PF01043">
    <property type="entry name" value="SecA_PP_bind"/>
    <property type="match status" value="1"/>
</dbReference>
<dbReference type="Pfam" id="PF07516">
    <property type="entry name" value="SecA_SW"/>
    <property type="match status" value="1"/>
</dbReference>
<dbReference type="PRINTS" id="PR00906">
    <property type="entry name" value="SECA"/>
</dbReference>
<dbReference type="SMART" id="SM00957">
    <property type="entry name" value="SecA_DEAD"/>
    <property type="match status" value="1"/>
</dbReference>
<dbReference type="SMART" id="SM00958">
    <property type="entry name" value="SecA_PP_bind"/>
    <property type="match status" value="1"/>
</dbReference>
<dbReference type="SUPFAM" id="SSF81886">
    <property type="entry name" value="Helical scaffold and wing domains of SecA"/>
    <property type="match status" value="1"/>
</dbReference>
<dbReference type="SUPFAM" id="SSF52540">
    <property type="entry name" value="P-loop containing nucleoside triphosphate hydrolases"/>
    <property type="match status" value="2"/>
</dbReference>
<dbReference type="SUPFAM" id="SSF81767">
    <property type="entry name" value="Pre-protein crosslinking domain of SecA"/>
    <property type="match status" value="1"/>
</dbReference>
<dbReference type="PROSITE" id="PS01312">
    <property type="entry name" value="SECA"/>
    <property type="match status" value="1"/>
</dbReference>
<dbReference type="PROSITE" id="PS51196">
    <property type="entry name" value="SECA_MOTOR_DEAD"/>
    <property type="match status" value="1"/>
</dbReference>